<proteinExistence type="inferred from homology"/>
<keyword id="KW-0472">Membrane</keyword>
<keyword id="KW-0812">Transmembrane</keyword>
<keyword id="KW-1133">Transmembrane helix</keyword>
<keyword id="KW-0813">Transport</keyword>
<name>EFUF_HORCR</name>
<accession>A0A2Z4HQ22</accession>
<feature type="chain" id="PRO_0000454463" description="MFS-type transporter efuF">
    <location>
        <begin position="1"/>
        <end position="493"/>
    </location>
</feature>
<feature type="transmembrane region" description="Helical" evidence="1">
    <location>
        <begin position="90"/>
        <end position="110"/>
    </location>
</feature>
<feature type="transmembrane region" description="Helical" evidence="1">
    <location>
        <begin position="117"/>
        <end position="137"/>
    </location>
</feature>
<feature type="transmembrane region" description="Helical" evidence="1">
    <location>
        <begin position="147"/>
        <end position="167"/>
    </location>
</feature>
<feature type="transmembrane region" description="Helical" evidence="1">
    <location>
        <begin position="179"/>
        <end position="199"/>
    </location>
</feature>
<feature type="transmembrane region" description="Helical" evidence="1">
    <location>
        <begin position="211"/>
        <end position="231"/>
    </location>
</feature>
<feature type="transmembrane region" description="Helical" evidence="1">
    <location>
        <begin position="279"/>
        <end position="299"/>
    </location>
</feature>
<feature type="transmembrane region" description="Helical" evidence="1">
    <location>
        <begin position="316"/>
        <end position="336"/>
    </location>
</feature>
<feature type="transmembrane region" description="Helical" evidence="1">
    <location>
        <begin position="343"/>
        <end position="363"/>
    </location>
</feature>
<feature type="transmembrane region" description="Helical" evidence="1">
    <location>
        <begin position="370"/>
        <end position="390"/>
    </location>
</feature>
<feature type="transmembrane region" description="Helical" evidence="1">
    <location>
        <begin position="406"/>
        <end position="426"/>
    </location>
</feature>
<feature type="transmembrane region" description="Helical" evidence="1">
    <location>
        <begin position="435"/>
        <end position="455"/>
    </location>
</feature>
<organism>
    <name type="scientific">Hormonema carpetanum</name>
    <dbReference type="NCBI Taxonomy" id="284138"/>
    <lineage>
        <taxon>Eukaryota</taxon>
        <taxon>Fungi</taxon>
        <taxon>Dikarya</taxon>
        <taxon>Ascomycota</taxon>
        <taxon>Pezizomycotina</taxon>
        <taxon>Dothideomycetes</taxon>
        <taxon>Dothideomycetidae</taxon>
        <taxon>Dothideales</taxon>
        <taxon>Dothioraceae</taxon>
        <taxon>Hormonema</taxon>
    </lineage>
</organism>
<gene>
    <name evidence="3" type="primary">efuF</name>
</gene>
<evidence type="ECO:0000255" key="1"/>
<evidence type="ECO:0000269" key="2">
    <source>
    </source>
</evidence>
<evidence type="ECO:0000303" key="3">
    <source>
    </source>
</evidence>
<evidence type="ECO:0000305" key="4"/>
<evidence type="ECO:0000305" key="5">
    <source>
    </source>
</evidence>
<reference key="1">
    <citation type="journal article" date="2018" name="Environ. Microbiol.">
        <title>Enfumafungin synthase represents a novel lineage of fungal triterpene cyclases.</title>
        <authorList>
            <person name="Kuhnert E."/>
            <person name="Li Y."/>
            <person name="Lan N."/>
            <person name="Yue Q."/>
            <person name="Chen L."/>
            <person name="Cox R.J."/>
            <person name="An Z."/>
            <person name="Yokoyama K."/>
            <person name="Bills G.F."/>
        </authorList>
    </citation>
    <scope>NUCLEOTIDE SEQUENCE [GENOMIC DNA]</scope>
    <scope>FUNCTION</scope>
</reference>
<protein>
    <recommendedName>
        <fullName evidence="3">MFS-type transporter efuF</fullName>
    </recommendedName>
    <alternativeName>
        <fullName evidence="3">Enfumafungin biosynthesis cluster protein F</fullName>
    </alternativeName>
</protein>
<sequence>MATSVEADTKSQVNLKVANDGGESASETGVVDVYDDPLIHNSIRKKLDLKLLPLLSAMYLFNAIDRSNLGNAKTDGLEKDLHMKGNEYSITLVLFYVTFCLLDVPANMLLKKFSGKIMLPTLMMGWGSMTLIQCAVHNWGGLIACRLLMGAFEAGFMAGVVYYLTTFYRRNELALRISIFYGAATIAGAFSGLLAYGVFQINHPSIPGWKFLMIIEGSATILLASFAYWHLPSSVLSCKWFTEEEKHVAEQRMLHDGSIQTDEKFALKTALANLLDWKIALYAVIGISYGVASASVGNFLPQMVQRLGFGTVKTNLYTVAPYCVGCVILLAQCTSSDHFRERSTHLAGAMLLTFVGFILLITLDTEAQPGPTYFACFLLAAGAFTPSCIFHSWHNNNTPSENGRAAVTGFMVGASNSGGIISSLAFASKTAPKYIPALIVTATFQGVGIVLVLGFGAWFRWDNRRRDRVQGVRIRTGDVATVSVDDASWRWTA</sequence>
<comment type="function">
    <text evidence="2 5">MFS-type transporter; part of the gene cluster that mediates the biosynthesis of enfumafungin, a glycosylated fernene-type triterpenoid with potent antifungal activity, mediated by its interaction with beta-1,3-glucan synthase and the fungal cell wall (PubMed:30051576). Might facilitate the transport of glucose units to the subcellular site of enfumafungin biosynthesis (Probable).</text>
</comment>
<comment type="subcellular location">
    <subcellularLocation>
        <location evidence="1">Membrane</location>
        <topology evidence="1">Multi-pass membrane protein</topology>
    </subcellularLocation>
</comment>
<comment type="similarity">
    <text evidence="4">Belongs to the major facilitator superfamily.</text>
</comment>
<dbReference type="EMBL" id="MF611887">
    <property type="protein sequence ID" value="AWW17215.1"/>
    <property type="molecule type" value="Genomic_DNA"/>
</dbReference>
<dbReference type="SMR" id="A0A2Z4HQ22"/>
<dbReference type="GO" id="GO:0016020">
    <property type="term" value="C:membrane"/>
    <property type="evidence" value="ECO:0007669"/>
    <property type="project" value="UniProtKB-SubCell"/>
</dbReference>
<dbReference type="GO" id="GO:0022857">
    <property type="term" value="F:transmembrane transporter activity"/>
    <property type="evidence" value="ECO:0007669"/>
    <property type="project" value="InterPro"/>
</dbReference>
<dbReference type="FunFam" id="1.20.1250.20:FF:000013">
    <property type="entry name" value="MFS general substrate transporter"/>
    <property type="match status" value="1"/>
</dbReference>
<dbReference type="FunFam" id="1.20.1250.20:FF:000188">
    <property type="entry name" value="MFS general substrate transporter"/>
    <property type="match status" value="1"/>
</dbReference>
<dbReference type="Gene3D" id="1.20.1250.20">
    <property type="entry name" value="MFS general substrate transporter like domains"/>
    <property type="match status" value="2"/>
</dbReference>
<dbReference type="InterPro" id="IPR011701">
    <property type="entry name" value="MFS"/>
</dbReference>
<dbReference type="InterPro" id="IPR020846">
    <property type="entry name" value="MFS_dom"/>
</dbReference>
<dbReference type="InterPro" id="IPR036259">
    <property type="entry name" value="MFS_trans_sf"/>
</dbReference>
<dbReference type="PANTHER" id="PTHR43791:SF9">
    <property type="entry name" value="MAJOR FACILITATOR-TYPE TRANSPORTER HXNP"/>
    <property type="match status" value="1"/>
</dbReference>
<dbReference type="PANTHER" id="PTHR43791">
    <property type="entry name" value="PERMEASE-RELATED"/>
    <property type="match status" value="1"/>
</dbReference>
<dbReference type="Pfam" id="PF07690">
    <property type="entry name" value="MFS_1"/>
    <property type="match status" value="1"/>
</dbReference>
<dbReference type="SUPFAM" id="SSF103473">
    <property type="entry name" value="MFS general substrate transporter"/>
    <property type="match status" value="1"/>
</dbReference>
<dbReference type="PROSITE" id="PS50850">
    <property type="entry name" value="MFS"/>
    <property type="match status" value="1"/>
</dbReference>